<accession>Q3AZM5</accession>
<keyword id="KW-0066">ATP synthesis</keyword>
<keyword id="KW-0138">CF(0)</keyword>
<keyword id="KW-0375">Hydrogen ion transport</keyword>
<keyword id="KW-0406">Ion transport</keyword>
<keyword id="KW-0446">Lipid-binding</keyword>
<keyword id="KW-0472">Membrane</keyword>
<keyword id="KW-1185">Reference proteome</keyword>
<keyword id="KW-0793">Thylakoid</keyword>
<keyword id="KW-0812">Transmembrane</keyword>
<keyword id="KW-1133">Transmembrane helix</keyword>
<keyword id="KW-0813">Transport</keyword>
<evidence type="ECO:0000255" key="1">
    <source>
        <dbReference type="HAMAP-Rule" id="MF_01396"/>
    </source>
</evidence>
<name>ATPL_SYNS9</name>
<feature type="chain" id="PRO_0000365929" description="ATP synthase subunit c">
    <location>
        <begin position="1"/>
        <end position="81"/>
    </location>
</feature>
<feature type="transmembrane region" description="Helical" evidence="1">
    <location>
        <begin position="7"/>
        <end position="27"/>
    </location>
</feature>
<feature type="transmembrane region" description="Helical" evidence="1">
    <location>
        <begin position="57"/>
        <end position="77"/>
    </location>
</feature>
<feature type="site" description="Reversibly protonated during proton transport" evidence="1">
    <location>
        <position position="61"/>
    </location>
</feature>
<organism>
    <name type="scientific">Synechococcus sp. (strain CC9902)</name>
    <dbReference type="NCBI Taxonomy" id="316279"/>
    <lineage>
        <taxon>Bacteria</taxon>
        <taxon>Bacillati</taxon>
        <taxon>Cyanobacteriota</taxon>
        <taxon>Cyanophyceae</taxon>
        <taxon>Synechococcales</taxon>
        <taxon>Synechococcaceae</taxon>
        <taxon>Synechococcus</taxon>
    </lineage>
</organism>
<gene>
    <name evidence="1" type="primary">atpE</name>
    <name evidence="1" type="synonym">atpH</name>
    <name type="ordered locus">Syncc9902_0484</name>
</gene>
<proteinExistence type="inferred from homology"/>
<reference key="1">
    <citation type="submission" date="2005-08" db="EMBL/GenBank/DDBJ databases">
        <title>Complete sequence of Synechococcus sp. CC9902.</title>
        <authorList>
            <person name="Copeland A."/>
            <person name="Lucas S."/>
            <person name="Lapidus A."/>
            <person name="Barry K."/>
            <person name="Detter J.C."/>
            <person name="Glavina T."/>
            <person name="Hammon N."/>
            <person name="Israni S."/>
            <person name="Pitluck S."/>
            <person name="Martinez M."/>
            <person name="Schmutz J."/>
            <person name="Larimer F."/>
            <person name="Land M."/>
            <person name="Kyrpides N."/>
            <person name="Ivanova N."/>
            <person name="Richardson P."/>
        </authorList>
    </citation>
    <scope>NUCLEOTIDE SEQUENCE [LARGE SCALE GENOMIC DNA]</scope>
    <source>
        <strain>CC9902</strain>
    </source>
</reference>
<dbReference type="EMBL" id="CP000097">
    <property type="protein sequence ID" value="ABB25452.1"/>
    <property type="molecule type" value="Genomic_DNA"/>
</dbReference>
<dbReference type="RefSeq" id="WP_009790499.1">
    <property type="nucleotide sequence ID" value="NC_007513.1"/>
</dbReference>
<dbReference type="SMR" id="Q3AZM5"/>
<dbReference type="STRING" id="316279.Syncc9902_0484"/>
<dbReference type="KEGG" id="sye:Syncc9902_0484"/>
<dbReference type="eggNOG" id="COG0636">
    <property type="taxonomic scope" value="Bacteria"/>
</dbReference>
<dbReference type="HOGENOM" id="CLU_148047_2_0_3"/>
<dbReference type="OrthoDB" id="9810379at2"/>
<dbReference type="Proteomes" id="UP000002712">
    <property type="component" value="Chromosome"/>
</dbReference>
<dbReference type="GO" id="GO:0031676">
    <property type="term" value="C:plasma membrane-derived thylakoid membrane"/>
    <property type="evidence" value="ECO:0007669"/>
    <property type="project" value="UniProtKB-SubCell"/>
</dbReference>
<dbReference type="GO" id="GO:0045259">
    <property type="term" value="C:proton-transporting ATP synthase complex"/>
    <property type="evidence" value="ECO:0007669"/>
    <property type="project" value="UniProtKB-KW"/>
</dbReference>
<dbReference type="GO" id="GO:0033177">
    <property type="term" value="C:proton-transporting two-sector ATPase complex, proton-transporting domain"/>
    <property type="evidence" value="ECO:0007669"/>
    <property type="project" value="InterPro"/>
</dbReference>
<dbReference type="GO" id="GO:0008289">
    <property type="term" value="F:lipid binding"/>
    <property type="evidence" value="ECO:0007669"/>
    <property type="project" value="UniProtKB-KW"/>
</dbReference>
<dbReference type="GO" id="GO:0046933">
    <property type="term" value="F:proton-transporting ATP synthase activity, rotational mechanism"/>
    <property type="evidence" value="ECO:0007669"/>
    <property type="project" value="UniProtKB-UniRule"/>
</dbReference>
<dbReference type="CDD" id="cd18183">
    <property type="entry name" value="ATP-synt_Fo_c_ATPH"/>
    <property type="match status" value="1"/>
</dbReference>
<dbReference type="FunFam" id="1.20.20.10:FF:000001">
    <property type="entry name" value="ATP synthase subunit c, chloroplastic"/>
    <property type="match status" value="1"/>
</dbReference>
<dbReference type="Gene3D" id="1.20.20.10">
    <property type="entry name" value="F1F0 ATP synthase subunit C"/>
    <property type="match status" value="1"/>
</dbReference>
<dbReference type="HAMAP" id="MF_01396">
    <property type="entry name" value="ATP_synth_c_bact"/>
    <property type="match status" value="1"/>
</dbReference>
<dbReference type="InterPro" id="IPR005953">
    <property type="entry name" value="ATP_synth_csu_bac/chlpt"/>
</dbReference>
<dbReference type="InterPro" id="IPR000454">
    <property type="entry name" value="ATP_synth_F0_csu"/>
</dbReference>
<dbReference type="InterPro" id="IPR020537">
    <property type="entry name" value="ATP_synth_F0_csu_DDCD_BS"/>
</dbReference>
<dbReference type="InterPro" id="IPR038662">
    <property type="entry name" value="ATP_synth_F0_csu_sf"/>
</dbReference>
<dbReference type="InterPro" id="IPR002379">
    <property type="entry name" value="ATPase_proteolipid_c-like_dom"/>
</dbReference>
<dbReference type="InterPro" id="IPR035921">
    <property type="entry name" value="F/V-ATP_Csub_sf"/>
</dbReference>
<dbReference type="NCBIfam" id="TIGR01260">
    <property type="entry name" value="ATP_synt_c"/>
    <property type="match status" value="1"/>
</dbReference>
<dbReference type="NCBIfam" id="NF005608">
    <property type="entry name" value="PRK07354.1"/>
    <property type="match status" value="1"/>
</dbReference>
<dbReference type="PANTHER" id="PTHR10031">
    <property type="entry name" value="ATP SYNTHASE LIPID-BINDING PROTEIN, MITOCHONDRIAL"/>
    <property type="match status" value="1"/>
</dbReference>
<dbReference type="PANTHER" id="PTHR10031:SF0">
    <property type="entry name" value="ATPASE PROTEIN 9"/>
    <property type="match status" value="1"/>
</dbReference>
<dbReference type="Pfam" id="PF00137">
    <property type="entry name" value="ATP-synt_C"/>
    <property type="match status" value="1"/>
</dbReference>
<dbReference type="PRINTS" id="PR00124">
    <property type="entry name" value="ATPASEC"/>
</dbReference>
<dbReference type="SUPFAM" id="SSF81333">
    <property type="entry name" value="F1F0 ATP synthase subunit C"/>
    <property type="match status" value="1"/>
</dbReference>
<dbReference type="PROSITE" id="PS00605">
    <property type="entry name" value="ATPASE_C"/>
    <property type="match status" value="1"/>
</dbReference>
<sequence>MDSITSAASVVAAGLAVGLAAIGPGIGQGTASGGAVEGIARQPEAEGKIRGTLLLSLAFMESLTIYGLVVALVLLFANPFA</sequence>
<comment type="function">
    <text evidence="1">F(1)F(0) ATP synthase produces ATP from ADP in the presence of a proton or sodium gradient. F-type ATPases consist of two structural domains, F(1) containing the extramembraneous catalytic core and F(0) containing the membrane proton channel, linked together by a central stalk and a peripheral stalk. During catalysis, ATP synthesis in the catalytic domain of F(1) is coupled via a rotary mechanism of the central stalk subunits to proton translocation.</text>
</comment>
<comment type="function">
    <text evidence="1">Key component of the F(0) channel; it plays a direct role in translocation across the membrane. A homomeric c-ring of between 10-14 subunits forms the central stalk rotor element with the F(1) delta and epsilon subunits.</text>
</comment>
<comment type="subunit">
    <text evidence="1">F-type ATPases have 2 components, F(1) - the catalytic core - and F(0) - the membrane proton channel. F(1) has five subunits: alpha(3), beta(3), gamma(1), delta(1), epsilon(1). F(0) has four main subunits: a(1), b(1), b'(1) and c(10-14). The alpha and beta chains form an alternating ring which encloses part of the gamma chain. F(1) is attached to F(0) by a central stalk formed by the gamma and epsilon chains, while a peripheral stalk is formed by the delta, b and b' chains.</text>
</comment>
<comment type="subcellular location">
    <subcellularLocation>
        <location evidence="1">Cellular thylakoid membrane</location>
        <topology evidence="1">Multi-pass membrane protein</topology>
    </subcellularLocation>
</comment>
<comment type="similarity">
    <text evidence="1">Belongs to the ATPase C chain family.</text>
</comment>
<protein>
    <recommendedName>
        <fullName evidence="1">ATP synthase subunit c</fullName>
    </recommendedName>
    <alternativeName>
        <fullName evidence="1">ATP synthase F(0) sector subunit c</fullName>
    </alternativeName>
    <alternativeName>
        <fullName evidence="1">F-type ATPase subunit c</fullName>
        <shortName evidence="1">F-ATPase subunit c</shortName>
    </alternativeName>
    <alternativeName>
        <fullName evidence="1">Lipid-binding protein</fullName>
    </alternativeName>
</protein>